<name>NADK_BURCM</name>
<sequence length="300" mass="32286">MKTGNQFNTVALVGRSNTPGIAEPLTTLAGCIAKLGFEVVFEVDTAREIGISGYPALTPAEIGARADVAVVLGGDGTMLGIGRQLAPYKTPLIGINHGRLGFITDIAAADMQARVPVILSGKFEREERSLLEARIVRDGEPIYHALAFNDVVVNRSGFSGMVELRASVDGRFMYNQRSDGLIVATPTGSTAYALSSAGPILHPQLQGIVLVPIAPHALSNRPIVLPDDSKIAIQIVGGRDVNVNFDMQSFTALELNDTIEVRRSKHTVPFLHPVGYSYYATLRKKLHWNEHASNEDDTAS</sequence>
<organism>
    <name type="scientific">Burkholderia ambifaria (strain ATCC BAA-244 / DSM 16087 / CCUG 44356 / LMG 19182 / AMMD)</name>
    <name type="common">Burkholderia cepacia (strain AMMD)</name>
    <dbReference type="NCBI Taxonomy" id="339670"/>
    <lineage>
        <taxon>Bacteria</taxon>
        <taxon>Pseudomonadati</taxon>
        <taxon>Pseudomonadota</taxon>
        <taxon>Betaproteobacteria</taxon>
        <taxon>Burkholderiales</taxon>
        <taxon>Burkholderiaceae</taxon>
        <taxon>Burkholderia</taxon>
        <taxon>Burkholderia cepacia complex</taxon>
    </lineage>
</organism>
<feature type="chain" id="PRO_1000005393" description="NAD kinase">
    <location>
        <begin position="1"/>
        <end position="300"/>
    </location>
</feature>
<feature type="active site" description="Proton acceptor" evidence="1">
    <location>
        <position position="75"/>
    </location>
</feature>
<feature type="binding site" evidence="1">
    <location>
        <begin position="75"/>
        <end position="76"/>
    </location>
    <ligand>
        <name>NAD(+)</name>
        <dbReference type="ChEBI" id="CHEBI:57540"/>
    </ligand>
</feature>
<feature type="binding site" evidence="1">
    <location>
        <begin position="149"/>
        <end position="150"/>
    </location>
    <ligand>
        <name>NAD(+)</name>
        <dbReference type="ChEBI" id="CHEBI:57540"/>
    </ligand>
</feature>
<feature type="binding site" evidence="1">
    <location>
        <position position="177"/>
    </location>
    <ligand>
        <name>NAD(+)</name>
        <dbReference type="ChEBI" id="CHEBI:57540"/>
    </ligand>
</feature>
<feature type="binding site" evidence="1">
    <location>
        <position position="179"/>
    </location>
    <ligand>
        <name>NAD(+)</name>
        <dbReference type="ChEBI" id="CHEBI:57540"/>
    </ligand>
</feature>
<feature type="binding site" evidence="1">
    <location>
        <begin position="190"/>
        <end position="195"/>
    </location>
    <ligand>
        <name>NAD(+)</name>
        <dbReference type="ChEBI" id="CHEBI:57540"/>
    </ligand>
</feature>
<feature type="binding site" evidence="1">
    <location>
        <position position="214"/>
    </location>
    <ligand>
        <name>NAD(+)</name>
        <dbReference type="ChEBI" id="CHEBI:57540"/>
    </ligand>
</feature>
<feature type="binding site" evidence="1">
    <location>
        <position position="248"/>
    </location>
    <ligand>
        <name>NAD(+)</name>
        <dbReference type="ChEBI" id="CHEBI:57540"/>
    </ligand>
</feature>
<protein>
    <recommendedName>
        <fullName evidence="1">NAD kinase</fullName>
        <ecNumber evidence="1">2.7.1.23</ecNumber>
    </recommendedName>
    <alternativeName>
        <fullName evidence="1">ATP-dependent NAD kinase</fullName>
    </alternativeName>
</protein>
<dbReference type="EC" id="2.7.1.23" evidence="1"/>
<dbReference type="EMBL" id="CP000440">
    <property type="protein sequence ID" value="ABI86197.1"/>
    <property type="molecule type" value="Genomic_DNA"/>
</dbReference>
<dbReference type="RefSeq" id="WP_006752731.1">
    <property type="nucleotide sequence ID" value="NZ_CP009798.1"/>
</dbReference>
<dbReference type="SMR" id="Q0BI26"/>
<dbReference type="KEGG" id="bam:Bamb_0638"/>
<dbReference type="PATRIC" id="fig|339670.21.peg.958"/>
<dbReference type="eggNOG" id="COG0061">
    <property type="taxonomic scope" value="Bacteria"/>
</dbReference>
<dbReference type="Proteomes" id="UP000000662">
    <property type="component" value="Chromosome 1"/>
</dbReference>
<dbReference type="GO" id="GO:0005737">
    <property type="term" value="C:cytoplasm"/>
    <property type="evidence" value="ECO:0007669"/>
    <property type="project" value="UniProtKB-SubCell"/>
</dbReference>
<dbReference type="GO" id="GO:0005524">
    <property type="term" value="F:ATP binding"/>
    <property type="evidence" value="ECO:0007669"/>
    <property type="project" value="UniProtKB-KW"/>
</dbReference>
<dbReference type="GO" id="GO:0046872">
    <property type="term" value="F:metal ion binding"/>
    <property type="evidence" value="ECO:0007669"/>
    <property type="project" value="UniProtKB-UniRule"/>
</dbReference>
<dbReference type="GO" id="GO:0051287">
    <property type="term" value="F:NAD binding"/>
    <property type="evidence" value="ECO:0007669"/>
    <property type="project" value="UniProtKB-ARBA"/>
</dbReference>
<dbReference type="GO" id="GO:0003951">
    <property type="term" value="F:NAD+ kinase activity"/>
    <property type="evidence" value="ECO:0007669"/>
    <property type="project" value="UniProtKB-UniRule"/>
</dbReference>
<dbReference type="GO" id="GO:0019674">
    <property type="term" value="P:NAD metabolic process"/>
    <property type="evidence" value="ECO:0007669"/>
    <property type="project" value="InterPro"/>
</dbReference>
<dbReference type="GO" id="GO:0006741">
    <property type="term" value="P:NADP biosynthetic process"/>
    <property type="evidence" value="ECO:0007669"/>
    <property type="project" value="UniProtKB-UniRule"/>
</dbReference>
<dbReference type="Gene3D" id="3.40.50.10330">
    <property type="entry name" value="Probable inorganic polyphosphate/atp-NAD kinase, domain 1"/>
    <property type="match status" value="1"/>
</dbReference>
<dbReference type="Gene3D" id="2.60.200.30">
    <property type="entry name" value="Probable inorganic polyphosphate/atp-NAD kinase, domain 2"/>
    <property type="match status" value="1"/>
</dbReference>
<dbReference type="HAMAP" id="MF_00361">
    <property type="entry name" value="NAD_kinase"/>
    <property type="match status" value="1"/>
</dbReference>
<dbReference type="InterPro" id="IPR017438">
    <property type="entry name" value="ATP-NAD_kinase_N"/>
</dbReference>
<dbReference type="InterPro" id="IPR017437">
    <property type="entry name" value="ATP-NAD_kinase_PpnK-typ_C"/>
</dbReference>
<dbReference type="InterPro" id="IPR016064">
    <property type="entry name" value="NAD/diacylglycerol_kinase_sf"/>
</dbReference>
<dbReference type="InterPro" id="IPR002504">
    <property type="entry name" value="NADK"/>
</dbReference>
<dbReference type="NCBIfam" id="NF002561">
    <property type="entry name" value="PRK02155.1"/>
    <property type="match status" value="1"/>
</dbReference>
<dbReference type="PANTHER" id="PTHR20275">
    <property type="entry name" value="NAD KINASE"/>
    <property type="match status" value="1"/>
</dbReference>
<dbReference type="PANTHER" id="PTHR20275:SF0">
    <property type="entry name" value="NAD KINASE"/>
    <property type="match status" value="1"/>
</dbReference>
<dbReference type="Pfam" id="PF01513">
    <property type="entry name" value="NAD_kinase"/>
    <property type="match status" value="1"/>
</dbReference>
<dbReference type="Pfam" id="PF20143">
    <property type="entry name" value="NAD_kinase_C"/>
    <property type="match status" value="1"/>
</dbReference>
<dbReference type="SUPFAM" id="SSF111331">
    <property type="entry name" value="NAD kinase/diacylglycerol kinase-like"/>
    <property type="match status" value="1"/>
</dbReference>
<evidence type="ECO:0000255" key="1">
    <source>
        <dbReference type="HAMAP-Rule" id="MF_00361"/>
    </source>
</evidence>
<gene>
    <name evidence="1" type="primary">nadK</name>
    <name type="ordered locus">Bamb_0638</name>
</gene>
<keyword id="KW-0067">ATP-binding</keyword>
<keyword id="KW-0963">Cytoplasm</keyword>
<keyword id="KW-0418">Kinase</keyword>
<keyword id="KW-0520">NAD</keyword>
<keyword id="KW-0521">NADP</keyword>
<keyword id="KW-0547">Nucleotide-binding</keyword>
<keyword id="KW-0808">Transferase</keyword>
<accession>Q0BI26</accession>
<reference key="1">
    <citation type="submission" date="2006-08" db="EMBL/GenBank/DDBJ databases">
        <title>Complete sequence of chromosome 1 of Burkholderia cepacia AMMD.</title>
        <authorList>
            <person name="Copeland A."/>
            <person name="Lucas S."/>
            <person name="Lapidus A."/>
            <person name="Barry K."/>
            <person name="Detter J.C."/>
            <person name="Glavina del Rio T."/>
            <person name="Hammon N."/>
            <person name="Israni S."/>
            <person name="Pitluck S."/>
            <person name="Bruce D."/>
            <person name="Chain P."/>
            <person name="Malfatti S."/>
            <person name="Shin M."/>
            <person name="Vergez L."/>
            <person name="Schmutz J."/>
            <person name="Larimer F."/>
            <person name="Land M."/>
            <person name="Hauser L."/>
            <person name="Kyrpides N."/>
            <person name="Kim E."/>
            <person name="Parke J."/>
            <person name="Coenye T."/>
            <person name="Konstantinidis K."/>
            <person name="Ramette A."/>
            <person name="Tiedje J."/>
            <person name="Richardson P."/>
        </authorList>
    </citation>
    <scope>NUCLEOTIDE SEQUENCE [LARGE SCALE GENOMIC DNA]</scope>
    <source>
        <strain>ATCC BAA-244 / DSM 16087 / CCUG 44356 / LMG 19182 / AMMD</strain>
    </source>
</reference>
<comment type="function">
    <text evidence="1">Involved in the regulation of the intracellular balance of NAD and NADP, and is a key enzyme in the biosynthesis of NADP. Catalyzes specifically the phosphorylation on 2'-hydroxyl of the adenosine moiety of NAD to yield NADP.</text>
</comment>
<comment type="catalytic activity">
    <reaction evidence="1">
        <text>NAD(+) + ATP = ADP + NADP(+) + H(+)</text>
        <dbReference type="Rhea" id="RHEA:18629"/>
        <dbReference type="ChEBI" id="CHEBI:15378"/>
        <dbReference type="ChEBI" id="CHEBI:30616"/>
        <dbReference type="ChEBI" id="CHEBI:57540"/>
        <dbReference type="ChEBI" id="CHEBI:58349"/>
        <dbReference type="ChEBI" id="CHEBI:456216"/>
        <dbReference type="EC" id="2.7.1.23"/>
    </reaction>
</comment>
<comment type="cofactor">
    <cofactor evidence="1">
        <name>a divalent metal cation</name>
        <dbReference type="ChEBI" id="CHEBI:60240"/>
    </cofactor>
</comment>
<comment type="subcellular location">
    <subcellularLocation>
        <location evidence="1">Cytoplasm</location>
    </subcellularLocation>
</comment>
<comment type="similarity">
    <text evidence="1">Belongs to the NAD kinase family.</text>
</comment>
<proteinExistence type="inferred from homology"/>